<comment type="function">
    <text evidence="1">Anchors the catalytic components of the fumarate reductase complex to the cell membrane, binds quinones.</text>
</comment>
<comment type="subunit">
    <text evidence="1">Part of an enzyme complex containing four subunits: a flavoprotein (FrdA), an iron-sulfur protein (FrdB), and two hydrophobic anchor proteins (FrdC and FrdD).</text>
</comment>
<comment type="subcellular location">
    <subcellularLocation>
        <location evidence="1">Cell membrane</location>
        <topology evidence="1">Multi-pass membrane protein</topology>
    </subcellularLocation>
</comment>
<comment type="similarity">
    <text evidence="1">Belongs to the FrdD family.</text>
</comment>
<gene>
    <name evidence="1" type="primary">frdD</name>
    <name type="ordered locus">Rv1555</name>
    <name type="ORF">MTCY48.10c</name>
</gene>
<accession>P9WNB5</accession>
<accession>L0T9S5</accession>
<accession>P67643</accession>
<accession>Q10763</accession>
<organism>
    <name type="scientific">Mycobacterium tuberculosis (strain ATCC 25618 / H37Rv)</name>
    <dbReference type="NCBI Taxonomy" id="83332"/>
    <lineage>
        <taxon>Bacteria</taxon>
        <taxon>Bacillati</taxon>
        <taxon>Actinomycetota</taxon>
        <taxon>Actinomycetes</taxon>
        <taxon>Mycobacteriales</taxon>
        <taxon>Mycobacteriaceae</taxon>
        <taxon>Mycobacterium</taxon>
        <taxon>Mycobacterium tuberculosis complex</taxon>
    </lineage>
</organism>
<dbReference type="EMBL" id="AL123456">
    <property type="protein sequence ID" value="CCP44319.1"/>
    <property type="molecule type" value="Genomic_DNA"/>
</dbReference>
<dbReference type="PIR" id="H70762">
    <property type="entry name" value="H70762"/>
</dbReference>
<dbReference type="RefSeq" id="NP_216071.1">
    <property type="nucleotide sequence ID" value="NC_000962.3"/>
</dbReference>
<dbReference type="RefSeq" id="WP_003407771.1">
    <property type="nucleotide sequence ID" value="NZ_NVQJ01000004.1"/>
</dbReference>
<dbReference type="SMR" id="P9WNB5"/>
<dbReference type="FunCoup" id="P9WNB5">
    <property type="interactions" value="203"/>
</dbReference>
<dbReference type="STRING" id="83332.Rv1555"/>
<dbReference type="PaxDb" id="83332-Rv1555"/>
<dbReference type="DNASU" id="886389"/>
<dbReference type="GeneID" id="886389"/>
<dbReference type="KEGG" id="mtu:Rv1555"/>
<dbReference type="KEGG" id="mtv:RVBD_1555"/>
<dbReference type="TubercuList" id="Rv1555"/>
<dbReference type="eggNOG" id="COG3080">
    <property type="taxonomic scope" value="Bacteria"/>
</dbReference>
<dbReference type="InParanoid" id="P9WNB5"/>
<dbReference type="OrthoDB" id="9804636at2"/>
<dbReference type="Proteomes" id="UP000001584">
    <property type="component" value="Chromosome"/>
</dbReference>
<dbReference type="GO" id="GO:0045283">
    <property type="term" value="C:fumarate reductase complex"/>
    <property type="evidence" value="ECO:0007669"/>
    <property type="project" value="UniProtKB-UniRule"/>
</dbReference>
<dbReference type="GO" id="GO:0005886">
    <property type="term" value="C:plasma membrane"/>
    <property type="evidence" value="ECO:0007669"/>
    <property type="project" value="UniProtKB-SubCell"/>
</dbReference>
<dbReference type="GO" id="GO:0000104">
    <property type="term" value="F:succinate dehydrogenase activity"/>
    <property type="evidence" value="ECO:0007669"/>
    <property type="project" value="UniProtKB-UniRule"/>
</dbReference>
<dbReference type="GO" id="GO:0006106">
    <property type="term" value="P:fumarate metabolic process"/>
    <property type="evidence" value="ECO:0007669"/>
    <property type="project" value="InterPro"/>
</dbReference>
<dbReference type="Gene3D" id="1.20.1300.10">
    <property type="entry name" value="Fumarate reductase/succinate dehydrogenase, transmembrane subunit"/>
    <property type="match status" value="1"/>
</dbReference>
<dbReference type="HAMAP" id="MF_00709">
    <property type="entry name" value="Fumarate_red_D"/>
    <property type="match status" value="1"/>
</dbReference>
<dbReference type="InterPro" id="IPR003418">
    <property type="entry name" value="Fumarate_red_D"/>
</dbReference>
<dbReference type="InterPro" id="IPR034804">
    <property type="entry name" value="SQR/QFR_C/D"/>
</dbReference>
<dbReference type="NCBIfam" id="NF003977">
    <property type="entry name" value="PRK05470.1-1"/>
    <property type="match status" value="1"/>
</dbReference>
<dbReference type="Pfam" id="PF02313">
    <property type="entry name" value="Fumarate_red_D"/>
    <property type="match status" value="1"/>
</dbReference>
<dbReference type="PIRSF" id="PIRSF000179">
    <property type="entry name" value="FrdD"/>
    <property type="match status" value="1"/>
</dbReference>
<dbReference type="SUPFAM" id="SSF81343">
    <property type="entry name" value="Fumarate reductase respiratory complex transmembrane subunits"/>
    <property type="match status" value="1"/>
</dbReference>
<name>FRDD_MYCTU</name>
<evidence type="ECO:0000255" key="1">
    <source>
        <dbReference type="HAMAP-Rule" id="MF_00709"/>
    </source>
</evidence>
<protein>
    <recommendedName>
        <fullName evidence="1">Fumarate reductase subunit D</fullName>
    </recommendedName>
    <alternativeName>
        <fullName evidence="1">Quinol-fumarate reductase subunit D</fullName>
        <shortName evidence="1">QFR subunit D</shortName>
    </alternativeName>
</protein>
<sequence>MTPSTSDARSRRRSAEPFLWLLFSAGGMVTALVAPVLLLLFGLAFPLGWLDAPDHGHLLAMVRNPITKLVVLVLVVLALFHAAHRFRFVLDHGLQLGRFDRVIALWCYGMAVLGSATAGWMLLTM</sequence>
<proteinExistence type="inferred from homology"/>
<keyword id="KW-1003">Cell membrane</keyword>
<keyword id="KW-0472">Membrane</keyword>
<keyword id="KW-1185">Reference proteome</keyword>
<keyword id="KW-0812">Transmembrane</keyword>
<keyword id="KW-1133">Transmembrane helix</keyword>
<feature type="chain" id="PRO_0000196547" description="Fumarate reductase subunit D">
    <location>
        <begin position="1"/>
        <end position="125"/>
    </location>
</feature>
<feature type="transmembrane region" description="Helical" evidence="1">
    <location>
        <begin position="29"/>
        <end position="49"/>
    </location>
</feature>
<feature type="transmembrane region" description="Helical" evidence="1">
    <location>
        <begin position="64"/>
        <end position="84"/>
    </location>
</feature>
<feature type="transmembrane region" description="Helical" evidence="1">
    <location>
        <begin position="102"/>
        <end position="122"/>
    </location>
</feature>
<reference key="1">
    <citation type="journal article" date="1998" name="Nature">
        <title>Deciphering the biology of Mycobacterium tuberculosis from the complete genome sequence.</title>
        <authorList>
            <person name="Cole S.T."/>
            <person name="Brosch R."/>
            <person name="Parkhill J."/>
            <person name="Garnier T."/>
            <person name="Churcher C.M."/>
            <person name="Harris D.E."/>
            <person name="Gordon S.V."/>
            <person name="Eiglmeier K."/>
            <person name="Gas S."/>
            <person name="Barry C.E. III"/>
            <person name="Tekaia F."/>
            <person name="Badcock K."/>
            <person name="Basham D."/>
            <person name="Brown D."/>
            <person name="Chillingworth T."/>
            <person name="Connor R."/>
            <person name="Davies R.M."/>
            <person name="Devlin K."/>
            <person name="Feltwell T."/>
            <person name="Gentles S."/>
            <person name="Hamlin N."/>
            <person name="Holroyd S."/>
            <person name="Hornsby T."/>
            <person name="Jagels K."/>
            <person name="Krogh A."/>
            <person name="McLean J."/>
            <person name="Moule S."/>
            <person name="Murphy L.D."/>
            <person name="Oliver S."/>
            <person name="Osborne J."/>
            <person name="Quail M.A."/>
            <person name="Rajandream M.A."/>
            <person name="Rogers J."/>
            <person name="Rutter S."/>
            <person name="Seeger K."/>
            <person name="Skelton S."/>
            <person name="Squares S."/>
            <person name="Squares R."/>
            <person name="Sulston J.E."/>
            <person name="Taylor K."/>
            <person name="Whitehead S."/>
            <person name="Barrell B.G."/>
        </authorList>
    </citation>
    <scope>NUCLEOTIDE SEQUENCE [LARGE SCALE GENOMIC DNA]</scope>
    <source>
        <strain>ATCC 25618 / H37Rv</strain>
    </source>
</reference>